<dbReference type="EMBL" id="CP000746">
    <property type="protein sequence ID" value="ABR74325.1"/>
    <property type="molecule type" value="Genomic_DNA"/>
</dbReference>
<dbReference type="RefSeq" id="WP_012072702.1">
    <property type="nucleotide sequence ID" value="NC_009655.1"/>
</dbReference>
<dbReference type="STRING" id="339671.Asuc_0957"/>
<dbReference type="KEGG" id="asu:Asuc_0957"/>
<dbReference type="eggNOG" id="COG3768">
    <property type="taxonomic scope" value="Bacteria"/>
</dbReference>
<dbReference type="HOGENOM" id="CLU_057693_2_0_6"/>
<dbReference type="OrthoDB" id="958025at2"/>
<dbReference type="Proteomes" id="UP000001114">
    <property type="component" value="Chromosome"/>
</dbReference>
<dbReference type="GO" id="GO:0005886">
    <property type="term" value="C:plasma membrane"/>
    <property type="evidence" value="ECO:0007669"/>
    <property type="project" value="UniProtKB-SubCell"/>
</dbReference>
<dbReference type="HAMAP" id="MF_01085">
    <property type="entry name" value="UPF0283"/>
    <property type="match status" value="1"/>
</dbReference>
<dbReference type="InterPro" id="IPR021147">
    <property type="entry name" value="DUF697"/>
</dbReference>
<dbReference type="InterPro" id="IPR006507">
    <property type="entry name" value="UPF0283"/>
</dbReference>
<dbReference type="NCBIfam" id="TIGR01620">
    <property type="entry name" value="hyp_HI0043"/>
    <property type="match status" value="1"/>
</dbReference>
<dbReference type="PANTHER" id="PTHR39342">
    <property type="entry name" value="UPF0283 MEMBRANE PROTEIN YCJF"/>
    <property type="match status" value="1"/>
</dbReference>
<dbReference type="PANTHER" id="PTHR39342:SF1">
    <property type="entry name" value="UPF0283 MEMBRANE PROTEIN YCJF"/>
    <property type="match status" value="1"/>
</dbReference>
<dbReference type="Pfam" id="PF05128">
    <property type="entry name" value="DUF697"/>
    <property type="match status" value="1"/>
</dbReference>
<accession>A6VMX8</accession>
<gene>
    <name type="ordered locus">Asuc_0957</name>
</gene>
<feature type="chain" id="PRO_1000073025" description="UPF0283 membrane protein Asuc_0957">
    <location>
        <begin position="1"/>
        <end position="360"/>
    </location>
</feature>
<feature type="transmembrane region" description="Helical" evidence="1">
    <location>
        <begin position="74"/>
        <end position="94"/>
    </location>
</feature>
<feature type="transmembrane region" description="Helical" evidence="1">
    <location>
        <begin position="102"/>
        <end position="122"/>
    </location>
</feature>
<feature type="transmembrane region" description="Helical" evidence="1">
    <location>
        <begin position="215"/>
        <end position="235"/>
    </location>
</feature>
<protein>
    <recommendedName>
        <fullName evidence="1">UPF0283 membrane protein Asuc_0957</fullName>
    </recommendedName>
</protein>
<keyword id="KW-0997">Cell inner membrane</keyword>
<keyword id="KW-1003">Cell membrane</keyword>
<keyword id="KW-0472">Membrane</keyword>
<keyword id="KW-1185">Reference proteome</keyword>
<keyword id="KW-0812">Transmembrane</keyword>
<keyword id="KW-1133">Transmembrane helix</keyword>
<proteinExistence type="inferred from homology"/>
<comment type="subcellular location">
    <subcellularLocation>
        <location evidence="1">Cell inner membrane</location>
        <topology evidence="1">Multi-pass membrane protein</topology>
    </subcellularLocation>
</comment>
<comment type="similarity">
    <text evidence="1">Belongs to the UPF0283 family.</text>
</comment>
<evidence type="ECO:0000255" key="1">
    <source>
        <dbReference type="HAMAP-Rule" id="MF_01085"/>
    </source>
</evidence>
<sequence>MNDKRVFNHVENNAGNEEEVFRVKREFSETAEIIPDLTALDDEREEKQALEGELLASQFEQAVRPRFRWWKRAVIAVAVLFLGATVAQSVQWLIDTWQANQWIYFAFAVVGCSVVGLGLSALGREFLRLRKLRQHLALRAESAVEFKDDFEIDKAKKLCGEITSSLGMDAQHPTVIQWQKQLNDGLTAREVGELFSKNVLYPIDNKAKKLITQSAVENGIVVAISPLAIVDMLFLAWRNTRLINRIANIYGIELGYWSRLRLMRMVFINMAFTGATELVQDIGLDWLSQDITAKLSGRIGQGLGVGLLTARLGIKTMEFCRPLTFNKDEKPRLSHIHRELLTSLKSVVLRSDKSRKKQNV</sequence>
<organism>
    <name type="scientific">Actinobacillus succinogenes (strain ATCC 55618 / DSM 22257 / CCUG 43843 / 130Z)</name>
    <dbReference type="NCBI Taxonomy" id="339671"/>
    <lineage>
        <taxon>Bacteria</taxon>
        <taxon>Pseudomonadati</taxon>
        <taxon>Pseudomonadota</taxon>
        <taxon>Gammaproteobacteria</taxon>
        <taxon>Pasteurellales</taxon>
        <taxon>Pasteurellaceae</taxon>
        <taxon>Actinobacillus</taxon>
    </lineage>
</organism>
<name>Y957_ACTSZ</name>
<reference key="1">
    <citation type="journal article" date="2010" name="BMC Genomics">
        <title>A genomic perspective on the potential of Actinobacillus succinogenes for industrial succinate production.</title>
        <authorList>
            <person name="McKinlay J.B."/>
            <person name="Laivenieks M."/>
            <person name="Schindler B.D."/>
            <person name="McKinlay A.A."/>
            <person name="Siddaramappa S."/>
            <person name="Challacombe J.F."/>
            <person name="Lowry S.R."/>
            <person name="Clum A."/>
            <person name="Lapidus A.L."/>
            <person name="Burkhart K.B."/>
            <person name="Harkins V."/>
            <person name="Vieille C."/>
        </authorList>
    </citation>
    <scope>NUCLEOTIDE SEQUENCE [LARGE SCALE GENOMIC DNA]</scope>
    <source>
        <strain>ATCC 55618 / DSM 22257 / CCUG 43843 / 130Z</strain>
    </source>
</reference>